<accession>Q7Y228</accession>
<evidence type="ECO:0000250" key="1">
    <source>
        <dbReference type="UniProtKB" id="Q04609"/>
    </source>
</evidence>
<evidence type="ECO:0000255" key="2"/>
<evidence type="ECO:0000255" key="3">
    <source>
        <dbReference type="PROSITE-ProRule" id="PRU00498"/>
    </source>
</evidence>
<evidence type="ECO:0000269" key="4">
    <source>
    </source>
</evidence>
<evidence type="ECO:0000303" key="5">
    <source>
    </source>
</evidence>
<evidence type="ECO:0000305" key="6"/>
<evidence type="ECO:0000305" key="7">
    <source>
    </source>
</evidence>
<evidence type="ECO:0000312" key="8">
    <source>
        <dbReference type="Araport" id="AT5G19740"/>
    </source>
</evidence>
<gene>
    <name evidence="5" type="primary">LAMP1</name>
    <name evidence="8" type="ordered locus">At5g19740</name>
</gene>
<dbReference type="EC" id="3.4.17.21" evidence="6"/>
<dbReference type="EMBL" id="AF296838">
    <property type="status" value="NOT_ANNOTATED_CDS"/>
    <property type="molecule type" value="Genomic_DNA"/>
</dbReference>
<dbReference type="EMBL" id="CP002688">
    <property type="protein sequence ID" value="AED92744.1"/>
    <property type="molecule type" value="Genomic_DNA"/>
</dbReference>
<dbReference type="EMBL" id="BT008323">
    <property type="protein sequence ID" value="AAP37682.1"/>
    <property type="molecule type" value="mRNA"/>
</dbReference>
<dbReference type="RefSeq" id="NP_197475.2">
    <property type="nucleotide sequence ID" value="NM_121979.4"/>
</dbReference>
<dbReference type="SMR" id="Q7Y228"/>
<dbReference type="FunCoup" id="Q7Y228">
    <property type="interactions" value="628"/>
</dbReference>
<dbReference type="STRING" id="3702.Q7Y228"/>
<dbReference type="MEROPS" id="M28.A02"/>
<dbReference type="GlyCosmos" id="Q7Y228">
    <property type="glycosylation" value="6 sites, No reported glycans"/>
</dbReference>
<dbReference type="GlyGen" id="Q7Y228">
    <property type="glycosylation" value="6 sites"/>
</dbReference>
<dbReference type="PaxDb" id="3702-AT5G19740.1"/>
<dbReference type="ProteomicsDB" id="237071"/>
<dbReference type="EnsemblPlants" id="AT5G19740.1">
    <property type="protein sequence ID" value="AT5G19740.1"/>
    <property type="gene ID" value="AT5G19740"/>
</dbReference>
<dbReference type="GeneID" id="832094"/>
<dbReference type="Gramene" id="AT5G19740.1">
    <property type="protein sequence ID" value="AT5G19740.1"/>
    <property type="gene ID" value="AT5G19740"/>
</dbReference>
<dbReference type="KEGG" id="ath:AT5G19740"/>
<dbReference type="Araport" id="AT5G19740"/>
<dbReference type="TAIR" id="AT5G19740">
    <property type="gene designation" value="LAMP1"/>
</dbReference>
<dbReference type="eggNOG" id="KOG2195">
    <property type="taxonomic scope" value="Eukaryota"/>
</dbReference>
<dbReference type="HOGENOM" id="CLU_005688_3_1_1"/>
<dbReference type="InParanoid" id="Q7Y228"/>
<dbReference type="OMA" id="TEWMEEY"/>
<dbReference type="PhylomeDB" id="Q7Y228"/>
<dbReference type="PRO" id="PR:Q7Y228"/>
<dbReference type="Proteomes" id="UP000006548">
    <property type="component" value="Chromosome 5"/>
</dbReference>
<dbReference type="ExpressionAtlas" id="Q7Y228">
    <property type="expression patterns" value="baseline and differential"/>
</dbReference>
<dbReference type="GO" id="GO:0005783">
    <property type="term" value="C:endoplasmic reticulum"/>
    <property type="evidence" value="ECO:0000314"/>
    <property type="project" value="TAIR"/>
</dbReference>
<dbReference type="GO" id="GO:0005789">
    <property type="term" value="C:endoplasmic reticulum membrane"/>
    <property type="evidence" value="ECO:0007669"/>
    <property type="project" value="UniProtKB-SubCell"/>
</dbReference>
<dbReference type="GO" id="GO:0005773">
    <property type="term" value="C:vacuole"/>
    <property type="evidence" value="ECO:0007005"/>
    <property type="project" value="TAIR"/>
</dbReference>
<dbReference type="GO" id="GO:0046872">
    <property type="term" value="F:metal ion binding"/>
    <property type="evidence" value="ECO:0007669"/>
    <property type="project" value="UniProtKB-KW"/>
</dbReference>
<dbReference type="GO" id="GO:0004181">
    <property type="term" value="F:metallocarboxypeptidase activity"/>
    <property type="evidence" value="ECO:0007669"/>
    <property type="project" value="UniProtKB-EC"/>
</dbReference>
<dbReference type="GO" id="GO:0010073">
    <property type="term" value="P:meristem maintenance"/>
    <property type="evidence" value="ECO:0000316"/>
    <property type="project" value="TAIR"/>
</dbReference>
<dbReference type="GO" id="GO:0006508">
    <property type="term" value="P:proteolysis"/>
    <property type="evidence" value="ECO:0007669"/>
    <property type="project" value="UniProtKB-KW"/>
</dbReference>
<dbReference type="GO" id="GO:0010075">
    <property type="term" value="P:regulation of meristem growth"/>
    <property type="evidence" value="ECO:0000316"/>
    <property type="project" value="TAIR"/>
</dbReference>
<dbReference type="CDD" id="cd08022">
    <property type="entry name" value="M28_PSMA_like"/>
    <property type="match status" value="1"/>
</dbReference>
<dbReference type="CDD" id="cd02121">
    <property type="entry name" value="PA_GCPII_like"/>
    <property type="match status" value="1"/>
</dbReference>
<dbReference type="FunFam" id="1.20.930.40:FF:000001">
    <property type="entry name" value="N-acetylated-alpha-linked acidic dipeptidase 2"/>
    <property type="match status" value="1"/>
</dbReference>
<dbReference type="FunFam" id="3.40.630.10:FF:000164">
    <property type="entry name" value="Os01g0740650 protein"/>
    <property type="match status" value="1"/>
</dbReference>
<dbReference type="Gene3D" id="3.50.30.30">
    <property type="match status" value="1"/>
</dbReference>
<dbReference type="Gene3D" id="1.20.930.40">
    <property type="entry name" value="Transferrin receptor-like, dimerisation domain"/>
    <property type="match status" value="1"/>
</dbReference>
<dbReference type="Gene3D" id="3.40.630.10">
    <property type="entry name" value="Zn peptidases"/>
    <property type="match status" value="1"/>
</dbReference>
<dbReference type="InterPro" id="IPR046450">
    <property type="entry name" value="PA_dom_sf"/>
</dbReference>
<dbReference type="InterPro" id="IPR003137">
    <property type="entry name" value="PA_domain"/>
</dbReference>
<dbReference type="InterPro" id="IPR007484">
    <property type="entry name" value="Peptidase_M28"/>
</dbReference>
<dbReference type="InterPro" id="IPR039373">
    <property type="entry name" value="Peptidase_M28B"/>
</dbReference>
<dbReference type="InterPro" id="IPR007365">
    <property type="entry name" value="TFR-like_dimer_dom"/>
</dbReference>
<dbReference type="InterPro" id="IPR036757">
    <property type="entry name" value="TFR-like_dimer_dom_sf"/>
</dbReference>
<dbReference type="PANTHER" id="PTHR10404">
    <property type="entry name" value="N-ACETYLATED-ALPHA-LINKED ACIDIC DIPEPTIDASE"/>
    <property type="match status" value="1"/>
</dbReference>
<dbReference type="PANTHER" id="PTHR10404:SF46">
    <property type="entry name" value="VACUOLAR PROTEIN SORTING-ASSOCIATED PROTEIN 70"/>
    <property type="match status" value="1"/>
</dbReference>
<dbReference type="Pfam" id="PF02225">
    <property type="entry name" value="PA"/>
    <property type="match status" value="1"/>
</dbReference>
<dbReference type="Pfam" id="PF04389">
    <property type="entry name" value="Peptidase_M28"/>
    <property type="match status" value="1"/>
</dbReference>
<dbReference type="Pfam" id="PF04253">
    <property type="entry name" value="TFR_dimer"/>
    <property type="match status" value="1"/>
</dbReference>
<dbReference type="SUPFAM" id="SSF52025">
    <property type="entry name" value="PA domain"/>
    <property type="match status" value="1"/>
</dbReference>
<dbReference type="SUPFAM" id="SSF47672">
    <property type="entry name" value="Transferrin receptor-like dimerisation domain"/>
    <property type="match status" value="1"/>
</dbReference>
<dbReference type="SUPFAM" id="SSF53187">
    <property type="entry name" value="Zn-dependent exopeptidases"/>
    <property type="match status" value="1"/>
</dbReference>
<feature type="chain" id="PRO_0000439194" description="Probable glutamate carboxypeptidase LAMP1">
    <location>
        <begin position="1"/>
        <end position="681"/>
    </location>
</feature>
<feature type="topological domain" description="Cytoplasmic" evidence="6">
    <location>
        <begin position="1"/>
        <end position="6"/>
    </location>
</feature>
<feature type="transmembrane region" description="Helical; Signal-anchor for type II membrane protein" evidence="2">
    <location>
        <begin position="7"/>
        <end position="24"/>
    </location>
</feature>
<feature type="topological domain" description="Extracellular" evidence="6">
    <location>
        <begin position="25"/>
        <end position="681"/>
    </location>
</feature>
<feature type="region of interest" description="Catalytic" evidence="6">
    <location>
        <begin position="241"/>
        <end position="527"/>
    </location>
</feature>
<feature type="active site" description="Nucleophile" evidence="1">
    <location>
        <position position="380"/>
    </location>
</feature>
<feature type="binding site" evidence="1">
    <location>
        <position position="333"/>
    </location>
    <ligand>
        <name>Zn(2+)</name>
        <dbReference type="ChEBI" id="CHEBI:29105"/>
        <label>1</label>
        <note>catalytic</note>
    </ligand>
</feature>
<feature type="binding site" evidence="1">
    <location>
        <position position="343"/>
    </location>
    <ligand>
        <name>Zn(2+)</name>
        <dbReference type="ChEBI" id="CHEBI:29105"/>
        <label>1</label>
        <note>catalytic</note>
    </ligand>
</feature>
<feature type="binding site" evidence="1">
    <location>
        <position position="343"/>
    </location>
    <ligand>
        <name>Zn(2+)</name>
        <dbReference type="ChEBI" id="CHEBI:29105"/>
        <label>2</label>
    </ligand>
</feature>
<feature type="binding site" evidence="1">
    <location>
        <position position="381"/>
    </location>
    <ligand>
        <name>Zn(2+)</name>
        <dbReference type="ChEBI" id="CHEBI:29105"/>
        <label>2</label>
    </ligand>
</feature>
<feature type="binding site" evidence="1">
    <location>
        <position position="409"/>
    </location>
    <ligand>
        <name>Zn(2+)</name>
        <dbReference type="ChEBI" id="CHEBI:29105"/>
        <label>1</label>
        <note>catalytic</note>
    </ligand>
</feature>
<feature type="binding site" evidence="1">
    <location>
        <position position="493"/>
    </location>
    <ligand>
        <name>Zn(2+)</name>
        <dbReference type="ChEBI" id="CHEBI:29105"/>
        <label>2</label>
    </ligand>
</feature>
<feature type="glycosylation site" description="N-linked (GlcNAc...) asparagine" evidence="3">
    <location>
        <position position="42"/>
    </location>
</feature>
<feature type="glycosylation site" description="N-linked (GlcNAc...) asparagine" evidence="3">
    <location>
        <position position="140"/>
    </location>
</feature>
<feature type="glycosylation site" description="N-linked (GlcNAc...) asparagine" evidence="3">
    <location>
        <position position="166"/>
    </location>
</feature>
<feature type="glycosylation site" description="N-linked (GlcNAc...) asparagine" evidence="3">
    <location>
        <position position="299"/>
    </location>
</feature>
<feature type="glycosylation site" description="N-linked (GlcNAc...) asparagine" evidence="3">
    <location>
        <position position="441"/>
    </location>
</feature>
<feature type="glycosylation site" description="N-linked (GlcNAc...) asparagine" evidence="3">
    <location>
        <position position="536"/>
    </location>
</feature>
<protein>
    <recommendedName>
        <fullName evidence="6">Probable glutamate carboxypeptidase LAMP1</fullName>
        <ecNumber evidence="6">3.4.17.21</ecNumber>
    </recommendedName>
    <alternativeName>
        <fullName evidence="5">Protein LIKE AMP1</fullName>
    </alternativeName>
</protein>
<sequence length="681" mass="74739">MSKSKSLAFVIAALSYSFFSLFSSPPKSHYHELFISTSFSDNASVALNLHTLTRRPHVAGTVANAEAAEYVRSVFTSSALKSHVVAYQVSLTYPVHRSLVLTPTDSAKPITFLLEQEKLGDNPYANEVMPTFHGYAKSGNVSGPVVYANYGRVEDFVRLKKDMGVNVSGAVVIARYGQIYRGDIVKNAYEAGAVGVVIYTDKRDYGGDEWFPASKWMPPSGVQVGTVYNGLGDPTTPGWASVDGCERLSDEAVELSGDVPLIPSLPVSAADAEVILKTVVGDVSDGDVYPVGPGPGVLNLSYIGETVIAKIENVIGVIEGEEEPDRYVILGNHRDAWTFGAVDPNSGTAVLMEIAQRLDKLQKRGWKPRRTIILCNWDAEEYGLIGSTEWVEENREMLSSRAVAYLNVDCAVSGPGFHASATPQLDELIKVAAQEVRDPDNATQTIYESWIGSSDSVVIRRLGGGGSDYASFVQHVGVPGVDMSFGRGYPVYHSMYDDFTWMEKFGDPMFQRHVAMASVLGLVALRLADEEIIPFNYTSYALELKKSAEDLENEKLGHNIDVSTLIKSIEDLSTAAKHISLEKEAIKGALKVRELNDRLMMAERALTDRDGLSERPWYKHLIYGPSKYDDYGSKSFPGVDDAIDNAKKLNTKASWENVQHQIWRVSRAIRHASLVLKGELI</sequence>
<proteinExistence type="evidence at transcript level"/>
<name>LAMP1_ARATH</name>
<keyword id="KW-0217">Developmental protein</keyword>
<keyword id="KW-0256">Endoplasmic reticulum</keyword>
<keyword id="KW-0325">Glycoprotein</keyword>
<keyword id="KW-0341">Growth regulation</keyword>
<keyword id="KW-0378">Hydrolase</keyword>
<keyword id="KW-0472">Membrane</keyword>
<keyword id="KW-0479">Metal-binding</keyword>
<keyword id="KW-0482">Metalloprotease</keyword>
<keyword id="KW-0645">Protease</keyword>
<keyword id="KW-1185">Reference proteome</keyword>
<keyword id="KW-0735">Signal-anchor</keyword>
<keyword id="KW-0812">Transmembrane</keyword>
<keyword id="KW-1133">Transmembrane helix</keyword>
<keyword id="KW-0862">Zinc</keyword>
<comment type="function">
    <text evidence="4">Acts in association with AMP1 to suppress ectopic stem cell niche formation in the shoot apical meristem (SAM) independently of cytokinin signaling pathway.</text>
</comment>
<comment type="catalytic activity">
    <reaction evidence="6">
        <text>Release of an unsubstituted, C-terminal glutamyl residue, typically from Ac-Asp-Glu or folylpoly-gamma-glutamates.</text>
        <dbReference type="EC" id="3.4.17.21"/>
    </reaction>
</comment>
<comment type="cofactor">
    <cofactor evidence="1">
        <name>Zn(2+)</name>
        <dbReference type="ChEBI" id="CHEBI:29105"/>
    </cofactor>
    <text evidence="1">Binds 2 Zn(2+) ions per subunit.</text>
</comment>
<comment type="subcellular location">
    <subcellularLocation>
        <location evidence="7">Endoplasmic reticulum membrane</location>
        <topology evidence="2">Single-pass type II membrane protein</topology>
    </subcellularLocation>
</comment>
<comment type="similarity">
    <text evidence="6">Belongs to the peptidase M28 family. M28B subfamily.</text>
</comment>
<organism>
    <name type="scientific">Arabidopsis thaliana</name>
    <name type="common">Mouse-ear cress</name>
    <dbReference type="NCBI Taxonomy" id="3702"/>
    <lineage>
        <taxon>Eukaryota</taxon>
        <taxon>Viridiplantae</taxon>
        <taxon>Streptophyta</taxon>
        <taxon>Embryophyta</taxon>
        <taxon>Tracheophyta</taxon>
        <taxon>Spermatophyta</taxon>
        <taxon>Magnoliopsida</taxon>
        <taxon>eudicotyledons</taxon>
        <taxon>Gunneridae</taxon>
        <taxon>Pentapetalae</taxon>
        <taxon>rosids</taxon>
        <taxon>malvids</taxon>
        <taxon>Brassicales</taxon>
        <taxon>Brassicaceae</taxon>
        <taxon>Camelineae</taxon>
        <taxon>Arabidopsis</taxon>
    </lineage>
</organism>
<reference key="1">
    <citation type="journal article" date="2000" name="Nature">
        <title>Sequence and analysis of chromosome 5 of the plant Arabidopsis thaliana.</title>
        <authorList>
            <person name="Tabata S."/>
            <person name="Kaneko T."/>
            <person name="Nakamura Y."/>
            <person name="Kotani H."/>
            <person name="Kato T."/>
            <person name="Asamizu E."/>
            <person name="Miyajima N."/>
            <person name="Sasamoto S."/>
            <person name="Kimura T."/>
            <person name="Hosouchi T."/>
            <person name="Kawashima K."/>
            <person name="Kohara M."/>
            <person name="Matsumoto M."/>
            <person name="Matsuno A."/>
            <person name="Muraki A."/>
            <person name="Nakayama S."/>
            <person name="Nakazaki N."/>
            <person name="Naruo K."/>
            <person name="Okumura S."/>
            <person name="Shinpo S."/>
            <person name="Takeuchi C."/>
            <person name="Wada T."/>
            <person name="Watanabe A."/>
            <person name="Yamada M."/>
            <person name="Yasuda M."/>
            <person name="Sato S."/>
            <person name="de la Bastide M."/>
            <person name="Huang E."/>
            <person name="Spiegel L."/>
            <person name="Gnoj L."/>
            <person name="O'Shaughnessy A."/>
            <person name="Preston R."/>
            <person name="Habermann K."/>
            <person name="Murray J."/>
            <person name="Johnson D."/>
            <person name="Rohlfing T."/>
            <person name="Nelson J."/>
            <person name="Stoneking T."/>
            <person name="Pepin K."/>
            <person name="Spieth J."/>
            <person name="Sekhon M."/>
            <person name="Armstrong J."/>
            <person name="Becker M."/>
            <person name="Belter E."/>
            <person name="Cordum H."/>
            <person name="Cordes M."/>
            <person name="Courtney L."/>
            <person name="Courtney W."/>
            <person name="Dante M."/>
            <person name="Du H."/>
            <person name="Edwards J."/>
            <person name="Fryman J."/>
            <person name="Haakensen B."/>
            <person name="Lamar E."/>
            <person name="Latreille P."/>
            <person name="Leonard S."/>
            <person name="Meyer R."/>
            <person name="Mulvaney E."/>
            <person name="Ozersky P."/>
            <person name="Riley A."/>
            <person name="Strowmatt C."/>
            <person name="Wagner-McPherson C."/>
            <person name="Wollam A."/>
            <person name="Yoakum M."/>
            <person name="Bell M."/>
            <person name="Dedhia N."/>
            <person name="Parnell L."/>
            <person name="Shah R."/>
            <person name="Rodriguez M."/>
            <person name="Hoon See L."/>
            <person name="Vil D."/>
            <person name="Baker J."/>
            <person name="Kirchoff K."/>
            <person name="Toth K."/>
            <person name="King L."/>
            <person name="Bahret A."/>
            <person name="Miller B."/>
            <person name="Marra M.A."/>
            <person name="Martienssen R."/>
            <person name="McCombie W.R."/>
            <person name="Wilson R.K."/>
            <person name="Murphy G."/>
            <person name="Bancroft I."/>
            <person name="Volckaert G."/>
            <person name="Wambutt R."/>
            <person name="Duesterhoeft A."/>
            <person name="Stiekema W."/>
            <person name="Pohl T."/>
            <person name="Entian K.-D."/>
            <person name="Terryn N."/>
            <person name="Hartley N."/>
            <person name="Bent E."/>
            <person name="Johnson S."/>
            <person name="Langham S.-A."/>
            <person name="McCullagh B."/>
            <person name="Robben J."/>
            <person name="Grymonprez B."/>
            <person name="Zimmermann W."/>
            <person name="Ramsperger U."/>
            <person name="Wedler H."/>
            <person name="Balke K."/>
            <person name="Wedler E."/>
            <person name="Peters S."/>
            <person name="van Staveren M."/>
            <person name="Dirkse W."/>
            <person name="Mooijman P."/>
            <person name="Klein Lankhorst R."/>
            <person name="Weitzenegger T."/>
            <person name="Bothe G."/>
            <person name="Rose M."/>
            <person name="Hauf J."/>
            <person name="Berneiser S."/>
            <person name="Hempel S."/>
            <person name="Feldpausch M."/>
            <person name="Lamberth S."/>
            <person name="Villarroel R."/>
            <person name="Gielen J."/>
            <person name="Ardiles W."/>
            <person name="Bents O."/>
            <person name="Lemcke K."/>
            <person name="Kolesov G."/>
            <person name="Mayer K.F.X."/>
            <person name="Rudd S."/>
            <person name="Schoof H."/>
            <person name="Schueller C."/>
            <person name="Zaccaria P."/>
            <person name="Mewes H.-W."/>
            <person name="Bevan M."/>
            <person name="Fransz P.F."/>
        </authorList>
    </citation>
    <scope>NUCLEOTIDE SEQUENCE [LARGE SCALE GENOMIC DNA]</scope>
    <source>
        <strain>cv. Columbia</strain>
    </source>
</reference>
<reference key="2">
    <citation type="journal article" date="2017" name="Plant J.">
        <title>Araport11: a complete reannotation of the Arabidopsis thaliana reference genome.</title>
        <authorList>
            <person name="Cheng C.Y."/>
            <person name="Krishnakumar V."/>
            <person name="Chan A.P."/>
            <person name="Thibaud-Nissen F."/>
            <person name="Schobel S."/>
            <person name="Town C.D."/>
        </authorList>
    </citation>
    <scope>GENOME REANNOTATION</scope>
    <source>
        <strain>cv. Columbia</strain>
    </source>
</reference>
<reference key="3">
    <citation type="journal article" date="2003" name="Science">
        <title>Empirical analysis of transcriptional activity in the Arabidopsis genome.</title>
        <authorList>
            <person name="Yamada K."/>
            <person name="Lim J."/>
            <person name="Dale J.M."/>
            <person name="Chen H."/>
            <person name="Shinn P."/>
            <person name="Palm C.J."/>
            <person name="Southwick A.M."/>
            <person name="Wu H.C."/>
            <person name="Kim C.J."/>
            <person name="Nguyen M."/>
            <person name="Pham P.K."/>
            <person name="Cheuk R.F."/>
            <person name="Karlin-Newmann G."/>
            <person name="Liu S.X."/>
            <person name="Lam B."/>
            <person name="Sakano H."/>
            <person name="Wu T."/>
            <person name="Yu G."/>
            <person name="Miranda M."/>
            <person name="Quach H.L."/>
            <person name="Tripp M."/>
            <person name="Chang C.H."/>
            <person name="Lee J.M."/>
            <person name="Toriumi M.J."/>
            <person name="Chan M.M."/>
            <person name="Tang C.C."/>
            <person name="Onodera C.S."/>
            <person name="Deng J.M."/>
            <person name="Akiyama K."/>
            <person name="Ansari Y."/>
            <person name="Arakawa T."/>
            <person name="Banh J."/>
            <person name="Banno F."/>
            <person name="Bowser L."/>
            <person name="Brooks S.Y."/>
            <person name="Carninci P."/>
            <person name="Chao Q."/>
            <person name="Choy N."/>
            <person name="Enju A."/>
            <person name="Goldsmith A.D."/>
            <person name="Gurjal M."/>
            <person name="Hansen N.F."/>
            <person name="Hayashizaki Y."/>
            <person name="Johnson-Hopson C."/>
            <person name="Hsuan V.W."/>
            <person name="Iida K."/>
            <person name="Karnes M."/>
            <person name="Khan S."/>
            <person name="Koesema E."/>
            <person name="Ishida J."/>
            <person name="Jiang P.X."/>
            <person name="Jones T."/>
            <person name="Kawai J."/>
            <person name="Kamiya A."/>
            <person name="Meyers C."/>
            <person name="Nakajima M."/>
            <person name="Narusaka M."/>
            <person name="Seki M."/>
            <person name="Sakurai T."/>
            <person name="Satou M."/>
            <person name="Tamse R."/>
            <person name="Vaysberg M."/>
            <person name="Wallender E.K."/>
            <person name="Wong C."/>
            <person name="Yamamura Y."/>
            <person name="Yuan S."/>
            <person name="Shinozaki K."/>
            <person name="Davis R.W."/>
            <person name="Theologis A."/>
            <person name="Ecker J.R."/>
        </authorList>
    </citation>
    <scope>NUCLEOTIDE SEQUENCE [LARGE SCALE MRNA]</scope>
    <source>
        <strain>cv. Columbia</strain>
    </source>
</reference>
<reference key="4">
    <citation type="journal article" date="2015" name="Plant Physiol.">
        <title>ALTERED MERISTEM PROGRAM1 suppresses ectopic stem cell niche formation in the shoot apical meristem in a largely cytokinin-independent manner.</title>
        <authorList>
            <person name="Huang W."/>
            <person name="Pitorre D."/>
            <person name="Poretska O."/>
            <person name="Marizzi C."/>
            <person name="Winter N."/>
            <person name="Poppenberger B."/>
            <person name="Sieberer T."/>
        </authorList>
    </citation>
    <scope>FUNCTION</scope>
</reference>